<evidence type="ECO:0000255" key="1">
    <source>
        <dbReference type="PROSITE-ProRule" id="PRU00805"/>
    </source>
</evidence>
<evidence type="ECO:0000305" key="2"/>
<keyword id="KW-0223">Dioxygenase</keyword>
<keyword id="KW-0903">Direct protein sequencing</keyword>
<keyword id="KW-0408">Iron</keyword>
<keyword id="KW-0479">Metal-binding</keyword>
<keyword id="KW-0560">Oxidoreductase</keyword>
<keyword id="KW-0847">Vitamin C</keyword>
<dbReference type="EC" id="1.14.11.11"/>
<dbReference type="EMBL" id="M62719">
    <property type="protein sequence ID" value="AAA33387.1"/>
    <property type="molecule type" value="mRNA"/>
</dbReference>
<dbReference type="EMBL" id="D26583">
    <property type="protein sequence ID" value="BAA05630.1"/>
    <property type="molecule type" value="Genomic_DNA"/>
</dbReference>
<dbReference type="PIR" id="A40005">
    <property type="entry name" value="A40005"/>
</dbReference>
<dbReference type="SMR" id="P24397"/>
<dbReference type="KEGG" id="ag:BAA05630"/>
<dbReference type="BRENDA" id="1.14.11.11">
    <property type="organism ID" value="2740"/>
</dbReference>
<dbReference type="BRENDA" id="1.14.20.13">
    <property type="organism ID" value="2740"/>
</dbReference>
<dbReference type="SABIO-RK" id="P24397"/>
<dbReference type="UniPathway" id="UPA00725"/>
<dbReference type="GO" id="GO:0047998">
    <property type="term" value="F:hyoscyamine (6S)-dioxygenase activity"/>
    <property type="evidence" value="ECO:0007669"/>
    <property type="project" value="UniProtKB-EC"/>
</dbReference>
<dbReference type="GO" id="GO:0031418">
    <property type="term" value="F:L-ascorbic acid binding"/>
    <property type="evidence" value="ECO:0007669"/>
    <property type="project" value="UniProtKB-KW"/>
</dbReference>
<dbReference type="GO" id="GO:0046872">
    <property type="term" value="F:metal ion binding"/>
    <property type="evidence" value="ECO:0007669"/>
    <property type="project" value="UniProtKB-KW"/>
</dbReference>
<dbReference type="GO" id="GO:0009805">
    <property type="term" value="P:coumarin biosynthetic process"/>
    <property type="evidence" value="ECO:0007669"/>
    <property type="project" value="UniProtKB-ARBA"/>
</dbReference>
<dbReference type="GO" id="GO:0002238">
    <property type="term" value="P:response to molecule of fungal origin"/>
    <property type="evidence" value="ECO:0007669"/>
    <property type="project" value="UniProtKB-ARBA"/>
</dbReference>
<dbReference type="Gene3D" id="2.60.120.330">
    <property type="entry name" value="B-lactam Antibiotic, Isopenicillin N Synthase, Chain"/>
    <property type="match status" value="1"/>
</dbReference>
<dbReference type="InterPro" id="IPR026992">
    <property type="entry name" value="DIOX_N"/>
</dbReference>
<dbReference type="InterPro" id="IPR044861">
    <property type="entry name" value="IPNS-like_FE2OG_OXY"/>
</dbReference>
<dbReference type="InterPro" id="IPR027443">
    <property type="entry name" value="IPNS-like_sf"/>
</dbReference>
<dbReference type="InterPro" id="IPR005123">
    <property type="entry name" value="Oxoglu/Fe-dep_dioxygenase_dom"/>
</dbReference>
<dbReference type="InterPro" id="IPR050295">
    <property type="entry name" value="Plant_2OG-oxidoreductases"/>
</dbReference>
<dbReference type="PANTHER" id="PTHR47991">
    <property type="entry name" value="OXOGLUTARATE/IRON-DEPENDENT DIOXYGENASE"/>
    <property type="match status" value="1"/>
</dbReference>
<dbReference type="Pfam" id="PF03171">
    <property type="entry name" value="2OG-FeII_Oxy"/>
    <property type="match status" value="1"/>
</dbReference>
<dbReference type="Pfam" id="PF14226">
    <property type="entry name" value="DIOX_N"/>
    <property type="match status" value="1"/>
</dbReference>
<dbReference type="PRINTS" id="PR00682">
    <property type="entry name" value="IPNSYNTHASE"/>
</dbReference>
<dbReference type="SUPFAM" id="SSF51197">
    <property type="entry name" value="Clavaminate synthase-like"/>
    <property type="match status" value="1"/>
</dbReference>
<dbReference type="PROSITE" id="PS51471">
    <property type="entry name" value="FE2OG_OXY"/>
    <property type="match status" value="1"/>
</dbReference>
<name>HY6H_HYONI</name>
<reference key="1">
    <citation type="journal article" date="1991" name="J. Biol. Chem.">
        <title>Molecular cloning of hyoscyamine 6 beta-hydroxylase, a 2-oxoglutarate-dependent dioxygenase, from cultured roots of Hyoscyamus niger.</title>
        <authorList>
            <person name="Matsuda J."/>
            <person name="Okabe S."/>
            <person name="Hashimoto T."/>
            <person name="Yamada Y."/>
        </authorList>
    </citation>
    <scope>NUCLEOTIDE SEQUENCE</scope>
    <scope>PARTIAL PROTEIN SEQUENCE</scope>
    <source>
        <tissue>Root</tissue>
    </source>
</reference>
<reference key="2">
    <citation type="journal article" date="1994" name="Plant Physiol.">
        <title>Species-dependent expression of the hyoscyamine 6 beta-hydroxylase gene in the pericycle.</title>
        <authorList>
            <person name="Kanegae T."/>
            <person name="Kajiya H."/>
            <person name="Amano Y."/>
            <person name="Hashimoto T."/>
            <person name="Yamada Y."/>
        </authorList>
    </citation>
    <scope>NUCLEOTIDE SEQUENCE [GENOMIC DNA]</scope>
</reference>
<proteinExistence type="evidence at protein level"/>
<organism>
    <name type="scientific">Hyoscyamus niger</name>
    <name type="common">Black henbane</name>
    <dbReference type="NCBI Taxonomy" id="4079"/>
    <lineage>
        <taxon>Eukaryota</taxon>
        <taxon>Viridiplantae</taxon>
        <taxon>Streptophyta</taxon>
        <taxon>Embryophyta</taxon>
        <taxon>Tracheophyta</taxon>
        <taxon>Spermatophyta</taxon>
        <taxon>Magnoliopsida</taxon>
        <taxon>eudicotyledons</taxon>
        <taxon>Gunneridae</taxon>
        <taxon>Pentapetalae</taxon>
        <taxon>asterids</taxon>
        <taxon>lamiids</taxon>
        <taxon>Solanales</taxon>
        <taxon>Solanaceae</taxon>
        <taxon>Solanoideae</taxon>
        <taxon>Hyoscyameae</taxon>
        <taxon>Hyoscyamus</taxon>
    </lineage>
</organism>
<accession>P24397</accession>
<feature type="chain" id="PRO_0000067281" description="Hyoscyamine 6-dioxygenase">
    <location>
        <begin position="1"/>
        <end position="344"/>
    </location>
</feature>
<feature type="domain" description="Fe2OG dioxygenase" evidence="1">
    <location>
        <begin position="193"/>
        <end position="293"/>
    </location>
</feature>
<feature type="binding site" evidence="1">
    <location>
        <position position="217"/>
    </location>
    <ligand>
        <name>Fe cation</name>
        <dbReference type="ChEBI" id="CHEBI:24875"/>
    </ligand>
</feature>
<feature type="binding site" evidence="1">
    <location>
        <position position="219"/>
    </location>
    <ligand>
        <name>Fe cation</name>
        <dbReference type="ChEBI" id="CHEBI:24875"/>
    </ligand>
</feature>
<feature type="binding site" evidence="1">
    <location>
        <position position="274"/>
    </location>
    <ligand>
        <name>Fe cation</name>
        <dbReference type="ChEBI" id="CHEBI:24875"/>
    </ligand>
</feature>
<feature type="binding site" evidence="1">
    <location>
        <position position="284"/>
    </location>
    <ligand>
        <name>2-oxoglutarate</name>
        <dbReference type="ChEBI" id="CHEBI:16810"/>
    </ligand>
</feature>
<sequence length="344" mass="39001">MATFVSNWSTKSVSESFIAPLQKRAEKDVPVGNDVPIIDLQQHHHLLVQQITKACQDFGLFQVINHGFPEELMLETMEVCKEFFALPAEEKEKFKPKGEAAKFELPLEQKAKLYVEGEQLSNEEFLYWKDTLAHGCHPLDQDLVNSWPEKPAKYREVVAKYSVEVRKLTMRMLDYICEGLGLKLGYFDNELSQIQMMLTNYYPPCPDPSSTLGSGGHYDGNLITLLQQDLPGLQQLIVKDATWIAVQPIPTAFVVNLGLTLKVITNEKFEGSIHRVVTDPTRDRVSIATLIGPDYSCTIEPAKELLNQDNPPLYKPYSYSEFADIYLSDKSDYDSGVKPYKINV</sequence>
<protein>
    <recommendedName>
        <fullName>Hyoscyamine 6-dioxygenase</fullName>
        <ecNumber>1.14.11.11</ecNumber>
    </recommendedName>
    <alternativeName>
        <fullName>Hyoscyamine 6-beta-hydroxylase</fullName>
    </alternativeName>
</protein>
<comment type="catalytic activity">
    <reaction>
        <text>L-hyoscyamine + 2-oxoglutarate + O2 = (6S)-6-hydroxyhyoscyamine + succinate + CO2</text>
        <dbReference type="Rhea" id="RHEA:12629"/>
        <dbReference type="ChEBI" id="CHEBI:15379"/>
        <dbReference type="ChEBI" id="CHEBI:16526"/>
        <dbReference type="ChEBI" id="CHEBI:16810"/>
        <dbReference type="ChEBI" id="CHEBI:30031"/>
        <dbReference type="ChEBI" id="CHEBI:57459"/>
        <dbReference type="ChEBI" id="CHEBI:58164"/>
        <dbReference type="EC" id="1.14.11.11"/>
    </reaction>
</comment>
<comment type="cofactor">
    <cofactor evidence="1">
        <name>Fe(2+)</name>
        <dbReference type="ChEBI" id="CHEBI:29033"/>
    </cofactor>
    <text evidence="1">Binds 1 Fe(2+) ion per subunit.</text>
</comment>
<comment type="cofactor">
    <cofactor>
        <name>L-ascorbate</name>
        <dbReference type="ChEBI" id="CHEBI:38290"/>
    </cofactor>
</comment>
<comment type="pathway">
    <text>Alkaloid biosynthesis; scopolamine biosynthesis.</text>
</comment>
<comment type="subunit">
    <text>Monomer.</text>
</comment>
<comment type="tissue specificity">
    <text>Root.</text>
</comment>
<comment type="PTM">
    <text>The N-terminus is blocked.</text>
</comment>
<comment type="similarity">
    <text evidence="2">Belongs to the iron/ascorbate-dependent oxidoreductase family.</text>
</comment>
<gene>
    <name type="primary">H6H</name>
</gene>